<name>YDCF_ECOLI</name>
<evidence type="ECO:0000269" key="1">
    <source>
    </source>
</evidence>
<evidence type="ECO:0000305" key="2"/>
<evidence type="ECO:0007829" key="3">
    <source>
        <dbReference type="PDB" id="3CA8"/>
    </source>
</evidence>
<keyword id="KW-0002">3D-structure</keyword>
<keyword id="KW-1185">Reference proteome</keyword>
<accession>P34209</accession>
<accession>P77578</accession>
<feature type="chain" id="PRO_0000168929" description="Protein YdcF">
    <location>
        <begin position="1"/>
        <end position="266"/>
    </location>
</feature>
<feature type="sequence conflict" description="In Ref. 1; AAA24246." evidence="2" ref="1">
    <original>A</original>
    <variation>R</variation>
    <location>
        <position position="97"/>
    </location>
</feature>
<feature type="sequence conflict" description="In Ref. 1." evidence="2" ref="1">
    <original>PRLRDDSDGYGPRGRDFIVHVDFPAEVIHAWQTLKHDAVLIEAMESRSLR</original>
    <variation>RVYAMIAMATVPAGEILSFTLIFRQKSSMHGKR</variation>
    <location>
        <begin position="217"/>
        <end position="266"/>
    </location>
</feature>
<feature type="helix" evidence="3">
    <location>
        <begin position="11"/>
        <end position="25"/>
    </location>
</feature>
<feature type="turn" evidence="3">
    <location>
        <begin position="29"/>
        <end position="32"/>
    </location>
</feature>
<feature type="strand" evidence="3">
    <location>
        <begin position="38"/>
        <end position="44"/>
    </location>
</feature>
<feature type="helix" evidence="3">
    <location>
        <begin position="48"/>
        <end position="61"/>
    </location>
</feature>
<feature type="strand" evidence="3">
    <location>
        <begin position="65"/>
        <end position="68"/>
    </location>
</feature>
<feature type="helix" evidence="3">
    <location>
        <begin position="75"/>
        <end position="83"/>
    </location>
</feature>
<feature type="helix" evidence="3">
    <location>
        <begin position="88"/>
        <end position="90"/>
    </location>
</feature>
<feature type="helix" evidence="3">
    <location>
        <begin position="98"/>
        <end position="108"/>
    </location>
</feature>
<feature type="helix" evidence="3">
    <location>
        <begin position="114"/>
        <end position="116"/>
    </location>
</feature>
<feature type="strand" evidence="3">
    <location>
        <begin position="117"/>
        <end position="120"/>
    </location>
</feature>
<feature type="helix" evidence="3">
    <location>
        <begin position="126"/>
        <end position="138"/>
    </location>
</feature>
<feature type="strand" evidence="3">
    <location>
        <begin position="147"/>
        <end position="150"/>
    </location>
</feature>
<feature type="turn" evidence="3">
    <location>
        <begin position="153"/>
        <end position="155"/>
    </location>
</feature>
<feature type="helix" evidence="3">
    <location>
        <begin position="156"/>
        <end position="167"/>
    </location>
</feature>
<feature type="strand" evidence="3">
    <location>
        <begin position="175"/>
        <end position="178"/>
    </location>
</feature>
<feature type="strand" evidence="3">
    <location>
        <begin position="186"/>
        <end position="189"/>
    </location>
</feature>
<feature type="strand" evidence="3">
    <location>
        <begin position="192"/>
        <end position="197"/>
    </location>
</feature>
<feature type="helix" evidence="3">
    <location>
        <begin position="205"/>
        <end position="219"/>
    </location>
</feature>
<feature type="strand" evidence="3">
    <location>
        <begin position="225"/>
        <end position="227"/>
    </location>
</feature>
<feature type="turn" evidence="3">
    <location>
        <begin position="228"/>
        <end position="231"/>
    </location>
</feature>
<feature type="helix" evidence="3">
    <location>
        <begin position="241"/>
        <end position="251"/>
    </location>
</feature>
<feature type="helix" evidence="3">
    <location>
        <begin position="254"/>
        <end position="262"/>
    </location>
</feature>
<reference key="1">
    <citation type="submission" date="1993-11" db="EMBL/GenBank/DDBJ databases">
        <title>A third gene with high homology to gap gene in the Escherichia coli chromosome.</title>
        <authorList>
            <person name="Hidalgo E."/>
            <person name="Limon A."/>
            <person name="Aguilar J."/>
        </authorList>
    </citation>
    <scope>NUCLEOTIDE SEQUENCE [GENOMIC DNA]</scope>
    <source>
        <strain>K12</strain>
    </source>
</reference>
<reference key="2">
    <citation type="journal article" date="1996" name="DNA Res.">
        <title>A 570-kb DNA sequence of the Escherichia coli K-12 genome corresponding to the 28.0-40.1 min region on the linkage map.</title>
        <authorList>
            <person name="Aiba H."/>
            <person name="Baba T."/>
            <person name="Fujita K."/>
            <person name="Hayashi K."/>
            <person name="Inada T."/>
            <person name="Isono K."/>
            <person name="Itoh T."/>
            <person name="Kasai H."/>
            <person name="Kashimoto K."/>
            <person name="Kimura S."/>
            <person name="Kitakawa M."/>
            <person name="Kitagawa M."/>
            <person name="Makino K."/>
            <person name="Miki T."/>
            <person name="Mizobuchi K."/>
            <person name="Mori H."/>
            <person name="Mori T."/>
            <person name="Motomura K."/>
            <person name="Nakade S."/>
            <person name="Nakamura Y."/>
            <person name="Nashimoto H."/>
            <person name="Nishio Y."/>
            <person name="Oshima T."/>
            <person name="Saito N."/>
            <person name="Sampei G."/>
            <person name="Seki Y."/>
            <person name="Sivasundaram S."/>
            <person name="Tagami H."/>
            <person name="Takeda J."/>
            <person name="Takemoto K."/>
            <person name="Takeuchi Y."/>
            <person name="Wada C."/>
            <person name="Yamamoto Y."/>
            <person name="Horiuchi T."/>
        </authorList>
    </citation>
    <scope>NUCLEOTIDE SEQUENCE [LARGE SCALE GENOMIC DNA]</scope>
    <source>
        <strain>K12 / W3110 / ATCC 27325 / DSM 5911</strain>
    </source>
</reference>
<reference key="3">
    <citation type="journal article" date="1997" name="Science">
        <title>The complete genome sequence of Escherichia coli K-12.</title>
        <authorList>
            <person name="Blattner F.R."/>
            <person name="Plunkett G. III"/>
            <person name="Bloch C.A."/>
            <person name="Perna N.T."/>
            <person name="Burland V."/>
            <person name="Riley M."/>
            <person name="Collado-Vides J."/>
            <person name="Glasner J.D."/>
            <person name="Rode C.K."/>
            <person name="Mayhew G.F."/>
            <person name="Gregor J."/>
            <person name="Davis N.W."/>
            <person name="Kirkpatrick H.A."/>
            <person name="Goeden M.A."/>
            <person name="Rose D.J."/>
            <person name="Mau B."/>
            <person name="Shao Y."/>
        </authorList>
    </citation>
    <scope>NUCLEOTIDE SEQUENCE [LARGE SCALE GENOMIC DNA]</scope>
    <source>
        <strain>K12 / MG1655 / ATCC 47076</strain>
    </source>
</reference>
<reference key="4">
    <citation type="journal article" date="2006" name="Mol. Syst. Biol.">
        <title>Highly accurate genome sequences of Escherichia coli K-12 strains MG1655 and W3110.</title>
        <authorList>
            <person name="Hayashi K."/>
            <person name="Morooka N."/>
            <person name="Yamamoto Y."/>
            <person name="Fujita K."/>
            <person name="Isono K."/>
            <person name="Choi S."/>
            <person name="Ohtsubo E."/>
            <person name="Baba T."/>
            <person name="Wanner B.L."/>
            <person name="Mori H."/>
            <person name="Horiuchi T."/>
        </authorList>
    </citation>
    <scope>NUCLEOTIDE SEQUENCE [LARGE SCALE GENOMIC DNA]</scope>
    <source>
        <strain>K12 / W3110 / ATCC 27325 / DSM 5911</strain>
    </source>
</reference>
<reference key="5">
    <citation type="journal article" date="1999" name="Electrophoresis">
        <title>Enrichment of low abundance proteins of Escherichia coli by hydroxyapatite chromatography.</title>
        <authorList>
            <person name="Fountoulakis M."/>
            <person name="Takacs M.-F."/>
            <person name="Berndt P."/>
            <person name="Langen H."/>
            <person name="Takacs B."/>
        </authorList>
    </citation>
    <scope>IDENTIFICATION BY MASS SPECTROMETRY</scope>
    <source>
        <strain>B / BL21</strain>
    </source>
</reference>
<reference key="6">
    <citation type="journal article" date="2008" name="Proteins">
        <title>The Escherichia coli YdcF binds S-adenosyl-L-methionine and adopts an alpha/beta-fold characteristic of nucleotide-utilizing enzymes.</title>
        <authorList>
            <person name="Chao K.L."/>
            <person name="Lim K."/>
            <person name="Lehmann C."/>
            <person name="Doseeva V."/>
            <person name="Howard A.J."/>
            <person name="Schwarz F.P."/>
            <person name="Herzberg O."/>
        </authorList>
    </citation>
    <scope>X-RAY CRYSTALLOGRAPHY (1.8 ANGSTROMS)</scope>
    <scope>SUBUNIT</scope>
    <scope>S-ADENOSYL-L-METHIONINE BINDING</scope>
</reference>
<proteinExistence type="evidence at protein level"/>
<comment type="function">
    <text>Binds S-adenosyl-L-methionine (AdoMet).</text>
</comment>
<comment type="subunit">
    <text evidence="1">Monomer.</text>
</comment>
<comment type="similarity">
    <text evidence="2">To S.coelicolor SCO4629.</text>
</comment>
<comment type="sequence caution" evidence="2">
    <conflict type="frameshift">
        <sequence resource="EMBL-CDS" id="AAA24246"/>
    </conflict>
</comment>
<protein>
    <recommendedName>
        <fullName>Protein YdcF</fullName>
    </recommendedName>
</protein>
<dbReference type="EMBL" id="L09068">
    <property type="protein sequence ID" value="AAA24246.1"/>
    <property type="status" value="ALT_FRAME"/>
    <property type="molecule type" value="Genomic_DNA"/>
</dbReference>
<dbReference type="EMBL" id="U00096">
    <property type="protein sequence ID" value="AAC74496.1"/>
    <property type="molecule type" value="Genomic_DNA"/>
</dbReference>
<dbReference type="EMBL" id="AP009048">
    <property type="protein sequence ID" value="BAA15030.1"/>
    <property type="molecule type" value="Genomic_DNA"/>
</dbReference>
<dbReference type="PIR" id="A64893">
    <property type="entry name" value="A64893"/>
</dbReference>
<dbReference type="RefSeq" id="NP_415932.1">
    <property type="nucleotide sequence ID" value="NC_000913.3"/>
</dbReference>
<dbReference type="RefSeq" id="WP_001027942.1">
    <property type="nucleotide sequence ID" value="NZ_SSZK01000021.1"/>
</dbReference>
<dbReference type="PDB" id="3CA8">
    <property type="method" value="X-ray"/>
    <property type="resolution" value="1.80 A"/>
    <property type="chains" value="A/B=1-266"/>
</dbReference>
<dbReference type="PDBsum" id="3CA8"/>
<dbReference type="SMR" id="P34209"/>
<dbReference type="BioGRID" id="4261553">
    <property type="interactions" value="11"/>
</dbReference>
<dbReference type="BioGRID" id="850575">
    <property type="interactions" value="1"/>
</dbReference>
<dbReference type="DIP" id="DIP-11642N"/>
<dbReference type="FunCoup" id="P34209">
    <property type="interactions" value="3"/>
</dbReference>
<dbReference type="IntAct" id="P34209">
    <property type="interactions" value="2"/>
</dbReference>
<dbReference type="STRING" id="511145.b1414"/>
<dbReference type="jPOST" id="P34209"/>
<dbReference type="PaxDb" id="511145-b1414"/>
<dbReference type="EnsemblBacteria" id="AAC74496">
    <property type="protein sequence ID" value="AAC74496"/>
    <property type="gene ID" value="b1414"/>
</dbReference>
<dbReference type="GeneID" id="75203495"/>
<dbReference type="GeneID" id="946215"/>
<dbReference type="KEGG" id="ecj:JW1411"/>
<dbReference type="KEGG" id="eco:b1414"/>
<dbReference type="KEGG" id="ecoc:C3026_08235"/>
<dbReference type="PATRIC" id="fig|1411691.4.peg.857"/>
<dbReference type="EchoBASE" id="EB2033"/>
<dbReference type="eggNOG" id="COG1434">
    <property type="taxonomic scope" value="Bacteria"/>
</dbReference>
<dbReference type="HOGENOM" id="CLU_084257_0_0_6"/>
<dbReference type="InParanoid" id="P34209"/>
<dbReference type="OMA" id="WPTFVPK"/>
<dbReference type="OrthoDB" id="2216870at2"/>
<dbReference type="PhylomeDB" id="P34209"/>
<dbReference type="BioCyc" id="EcoCyc:EG12110-MONOMER"/>
<dbReference type="EvolutionaryTrace" id="P34209"/>
<dbReference type="PRO" id="PR:P34209"/>
<dbReference type="Proteomes" id="UP000000625">
    <property type="component" value="Chromosome"/>
</dbReference>
<dbReference type="GO" id="GO:0005886">
    <property type="term" value="C:plasma membrane"/>
    <property type="evidence" value="ECO:0000318"/>
    <property type="project" value="GO_Central"/>
</dbReference>
<dbReference type="CDD" id="cd06259">
    <property type="entry name" value="YdcF-like"/>
    <property type="match status" value="1"/>
</dbReference>
<dbReference type="Gene3D" id="3.40.50.620">
    <property type="entry name" value="HUPs"/>
    <property type="match status" value="1"/>
</dbReference>
<dbReference type="Gene3D" id="1.10.3620.10">
    <property type="entry name" value="YdcF like domain"/>
    <property type="match status" value="1"/>
</dbReference>
<dbReference type="InterPro" id="IPR051599">
    <property type="entry name" value="Cell_Envelope_Assoc"/>
</dbReference>
<dbReference type="InterPro" id="IPR003848">
    <property type="entry name" value="DUF218"/>
</dbReference>
<dbReference type="InterPro" id="IPR014729">
    <property type="entry name" value="Rossmann-like_a/b/a_fold"/>
</dbReference>
<dbReference type="PANTHER" id="PTHR30336:SF20">
    <property type="entry name" value="DUF218 DOMAIN-CONTAINING PROTEIN"/>
    <property type="match status" value="1"/>
</dbReference>
<dbReference type="PANTHER" id="PTHR30336">
    <property type="entry name" value="INNER MEMBRANE PROTEIN, PROBABLE PERMEASE"/>
    <property type="match status" value="1"/>
</dbReference>
<dbReference type="Pfam" id="PF02698">
    <property type="entry name" value="DUF218"/>
    <property type="match status" value="1"/>
</dbReference>
<organism>
    <name type="scientific">Escherichia coli (strain K12)</name>
    <dbReference type="NCBI Taxonomy" id="83333"/>
    <lineage>
        <taxon>Bacteria</taxon>
        <taxon>Pseudomonadati</taxon>
        <taxon>Pseudomonadota</taxon>
        <taxon>Gammaproteobacteria</taxon>
        <taxon>Enterobacterales</taxon>
        <taxon>Enterobacteriaceae</taxon>
        <taxon>Escherichia</taxon>
    </lineage>
</organism>
<gene>
    <name type="primary">ydcF</name>
    <name type="ordered locus">b1414</name>
    <name type="ordered locus">JW1411</name>
</gene>
<sequence length="266" mass="29706">MNITPFPTLSPATIDAINVIGQWLAQDDFSGEVPYQADCVILAGNAVMPTIDAACKIARDQQIPLLISGGIGHSTTFLYSAIAQHPHYNTIRTTGRAEATILADIAHQFWHIPHEKIWIEDQSTNCGENARFSIALLNQAVERVHTAIVVQDPTMQRRTMATFRRMTGDNPDAPRWLSYPGFVPQLGNNADSVIFINQLQGLWPVERYLSLLTGELPRLRDDSDGYGPRGRDFIVHVDFPAEVIHAWQTLKHDAVLIEAMESRSLR</sequence>